<feature type="signal peptide" evidence="1">
    <location>
        <begin position="1"/>
        <end position="21"/>
    </location>
</feature>
<feature type="chain" id="PRO_0000045957" description="Protein YebF">
    <location>
        <begin position="22"/>
        <end position="118"/>
    </location>
</feature>
<feature type="domain" description="YebF/Cmi" evidence="2">
    <location>
        <begin position="31"/>
        <end position="118"/>
    </location>
</feature>
<feature type="disulfide bond" evidence="2">
    <location>
        <begin position="35"/>
        <end position="108"/>
    </location>
</feature>
<keyword id="KW-1015">Disulfide bond</keyword>
<keyword id="KW-1185">Reference proteome</keyword>
<keyword id="KW-0964">Secreted</keyword>
<keyword id="KW-0732">Signal</keyword>
<gene>
    <name evidence="1" type="primary">yebF</name>
    <name type="ordered locus">SSON_1301</name>
</gene>
<reference key="1">
    <citation type="journal article" date="2005" name="Nucleic Acids Res.">
        <title>Genome dynamics and diversity of Shigella species, the etiologic agents of bacillary dysentery.</title>
        <authorList>
            <person name="Yang F."/>
            <person name="Yang J."/>
            <person name="Zhang X."/>
            <person name="Chen L."/>
            <person name="Jiang Y."/>
            <person name="Yan Y."/>
            <person name="Tang X."/>
            <person name="Wang J."/>
            <person name="Xiong Z."/>
            <person name="Dong J."/>
            <person name="Xue Y."/>
            <person name="Zhu Y."/>
            <person name="Xu X."/>
            <person name="Sun L."/>
            <person name="Chen S."/>
            <person name="Nie H."/>
            <person name="Peng J."/>
            <person name="Xu J."/>
            <person name="Wang Y."/>
            <person name="Yuan Z."/>
            <person name="Wen Y."/>
            <person name="Yao Z."/>
            <person name="Shen Y."/>
            <person name="Qiang B."/>
            <person name="Hou Y."/>
            <person name="Yu J."/>
            <person name="Jin Q."/>
        </authorList>
    </citation>
    <scope>NUCLEOTIDE SEQUENCE [LARGE SCALE GENOMIC DNA]</scope>
    <source>
        <strain>Ss046</strain>
    </source>
</reference>
<proteinExistence type="inferred from homology"/>
<dbReference type="EMBL" id="CP000038">
    <property type="protein sequence ID" value="AAZ88014.1"/>
    <property type="status" value="ALT_INIT"/>
    <property type="molecule type" value="Genomic_DNA"/>
</dbReference>
<dbReference type="RefSeq" id="WP_001295500.1">
    <property type="nucleotide sequence ID" value="NC_007384.1"/>
</dbReference>
<dbReference type="BMRB" id="Q3Z2J8"/>
<dbReference type="SMR" id="Q3Z2J8"/>
<dbReference type="GeneID" id="93776114"/>
<dbReference type="KEGG" id="ssn:SSON_1301"/>
<dbReference type="HOGENOM" id="CLU_161319_1_0_6"/>
<dbReference type="Proteomes" id="UP000002529">
    <property type="component" value="Chromosome"/>
</dbReference>
<dbReference type="GO" id="GO:0005576">
    <property type="term" value="C:extracellular region"/>
    <property type="evidence" value="ECO:0007669"/>
    <property type="project" value="UniProtKB-SubCell"/>
</dbReference>
<dbReference type="Gene3D" id="3.10.450.300">
    <property type="entry name" value="YebF/Colicin-M immunity protein"/>
    <property type="match status" value="1"/>
</dbReference>
<dbReference type="HAMAP" id="MF_01435">
    <property type="entry name" value="YebF"/>
    <property type="match status" value="1"/>
</dbReference>
<dbReference type="InterPro" id="IPR020236">
    <property type="entry name" value="Uncharacterised_YebF"/>
</dbReference>
<dbReference type="InterPro" id="IPR038703">
    <property type="entry name" value="YebF/Cmi_sf"/>
</dbReference>
<dbReference type="InterPro" id="IPR025603">
    <property type="entry name" value="YebF/ColM_immunity"/>
</dbReference>
<dbReference type="NCBIfam" id="NF010224">
    <property type="entry name" value="PRK13680.1"/>
    <property type="match status" value="1"/>
</dbReference>
<dbReference type="NCBIfam" id="NF041240">
    <property type="entry name" value="YebF_not_Cmi"/>
    <property type="match status" value="1"/>
</dbReference>
<dbReference type="Pfam" id="PF13995">
    <property type="entry name" value="YebF"/>
    <property type="match status" value="1"/>
</dbReference>
<dbReference type="PROSITE" id="PS51979">
    <property type="entry name" value="YEBF_CMI"/>
    <property type="match status" value="1"/>
</dbReference>
<comment type="subcellular location">
    <subcellularLocation>
        <location evidence="1">Secreted</location>
    </subcellularLocation>
</comment>
<comment type="similarity">
    <text evidence="1">Belongs to the YebF family.</text>
</comment>
<comment type="sequence caution" evidence="3">
    <conflict type="erroneous initiation">
        <sequence resource="EMBL-CDS" id="AAZ88014"/>
    </conflict>
</comment>
<sequence>MKKRGAFLGLLLVSACASVFAANNETSKSVTFPKCEGLDAAGIAASVKRDYQQNRVARWADDQKIVGQADPVAWVSLQDIQGKDDKWSVPLTVRGKSADIHYQVSVDCKAGMAEYQRR</sequence>
<name>YEBF_SHISS</name>
<organism>
    <name type="scientific">Shigella sonnei (strain Ss046)</name>
    <dbReference type="NCBI Taxonomy" id="300269"/>
    <lineage>
        <taxon>Bacteria</taxon>
        <taxon>Pseudomonadati</taxon>
        <taxon>Pseudomonadota</taxon>
        <taxon>Gammaproteobacteria</taxon>
        <taxon>Enterobacterales</taxon>
        <taxon>Enterobacteriaceae</taxon>
        <taxon>Shigella</taxon>
    </lineage>
</organism>
<evidence type="ECO:0000255" key="1">
    <source>
        <dbReference type="HAMAP-Rule" id="MF_01435"/>
    </source>
</evidence>
<evidence type="ECO:0000255" key="2">
    <source>
        <dbReference type="PROSITE-ProRule" id="PRU01323"/>
    </source>
</evidence>
<evidence type="ECO:0000305" key="3"/>
<accession>Q3Z2J8</accession>
<protein>
    <recommendedName>
        <fullName evidence="1">Protein YebF</fullName>
    </recommendedName>
</protein>